<evidence type="ECO:0000250" key="1"/>
<evidence type="ECO:0000250" key="2">
    <source>
        <dbReference type="UniProtKB" id="P15436"/>
    </source>
</evidence>
<evidence type="ECO:0000250" key="3">
    <source>
        <dbReference type="UniProtKB" id="P21951"/>
    </source>
</evidence>
<evidence type="ECO:0000269" key="4">
    <source>
    </source>
</evidence>
<evidence type="ECO:0000269" key="5">
    <source>
    </source>
</evidence>
<evidence type="ECO:0000269" key="6">
    <source>
    </source>
</evidence>
<evidence type="ECO:0000269" key="7">
    <source>
    </source>
</evidence>
<evidence type="ECO:0000305" key="8"/>
<dbReference type="EC" id="2.7.7.7" evidence="2"/>
<dbReference type="EMBL" id="AC011438">
    <property type="protein sequence ID" value="AAF18240.1"/>
    <property type="status" value="ALT_SEQ"/>
    <property type="molecule type" value="Genomic_DNA"/>
</dbReference>
<dbReference type="EMBL" id="CP002684">
    <property type="protein sequence ID" value="AEE28266.1"/>
    <property type="molecule type" value="Genomic_DNA"/>
</dbReference>
<dbReference type="RefSeq" id="NP_172303.5">
    <property type="nucleotide sequence ID" value="NM_100699.6"/>
</dbReference>
<dbReference type="SMR" id="F4HW04"/>
<dbReference type="FunCoup" id="F4HW04">
    <property type="interactions" value="2812"/>
</dbReference>
<dbReference type="STRING" id="3702.F4HW04"/>
<dbReference type="GlyGen" id="F4HW04">
    <property type="glycosylation" value="1 site"/>
</dbReference>
<dbReference type="iPTMnet" id="F4HW04"/>
<dbReference type="PaxDb" id="3702-AT1G08260.1"/>
<dbReference type="ProteomicsDB" id="220613"/>
<dbReference type="EnsemblPlants" id="AT1G08260.1">
    <property type="protein sequence ID" value="AT1G08260.1"/>
    <property type="gene ID" value="AT1G08260"/>
</dbReference>
<dbReference type="GeneID" id="837346"/>
<dbReference type="Gramene" id="AT1G08260.1">
    <property type="protein sequence ID" value="AT1G08260.1"/>
    <property type="gene ID" value="AT1G08260"/>
</dbReference>
<dbReference type="KEGG" id="ath:AT1G08260"/>
<dbReference type="Araport" id="AT1G08260"/>
<dbReference type="TAIR" id="AT1G08260">
    <property type="gene designation" value="TIL1"/>
</dbReference>
<dbReference type="eggNOG" id="KOG1798">
    <property type="taxonomic scope" value="Eukaryota"/>
</dbReference>
<dbReference type="HOGENOM" id="CLU_000556_0_1_1"/>
<dbReference type="InParanoid" id="F4HW04"/>
<dbReference type="OMA" id="MLDQCRY"/>
<dbReference type="PRO" id="PR:F4HW04"/>
<dbReference type="Proteomes" id="UP000006548">
    <property type="component" value="Chromosome 1"/>
</dbReference>
<dbReference type="ExpressionAtlas" id="F4HW04">
    <property type="expression patterns" value="baseline and differential"/>
</dbReference>
<dbReference type="GO" id="GO:0048046">
    <property type="term" value="C:apoplast"/>
    <property type="evidence" value="ECO:0007005"/>
    <property type="project" value="TAIR"/>
</dbReference>
<dbReference type="GO" id="GO:0008622">
    <property type="term" value="C:epsilon DNA polymerase complex"/>
    <property type="evidence" value="ECO:0000314"/>
    <property type="project" value="UniProtKB"/>
</dbReference>
<dbReference type="GO" id="GO:0051539">
    <property type="term" value="F:4 iron, 4 sulfur cluster binding"/>
    <property type="evidence" value="ECO:0007669"/>
    <property type="project" value="UniProtKB-KW"/>
</dbReference>
<dbReference type="GO" id="GO:0003677">
    <property type="term" value="F:DNA binding"/>
    <property type="evidence" value="ECO:0007669"/>
    <property type="project" value="UniProtKB-KW"/>
</dbReference>
<dbReference type="GO" id="GO:0003887">
    <property type="term" value="F:DNA-directed DNA polymerase activity"/>
    <property type="evidence" value="ECO:0007669"/>
    <property type="project" value="UniProtKB-KW"/>
</dbReference>
<dbReference type="GO" id="GO:0000166">
    <property type="term" value="F:nucleotide binding"/>
    <property type="evidence" value="ECO:0007669"/>
    <property type="project" value="InterPro"/>
</dbReference>
<dbReference type="GO" id="GO:0008270">
    <property type="term" value="F:zinc ion binding"/>
    <property type="evidence" value="ECO:0007669"/>
    <property type="project" value="UniProtKB-KW"/>
</dbReference>
<dbReference type="GO" id="GO:0006281">
    <property type="term" value="P:DNA repair"/>
    <property type="evidence" value="ECO:0007669"/>
    <property type="project" value="InterPro"/>
</dbReference>
<dbReference type="GO" id="GO:0006260">
    <property type="term" value="P:DNA replication"/>
    <property type="evidence" value="ECO:0007669"/>
    <property type="project" value="UniProtKB-KW"/>
</dbReference>
<dbReference type="GO" id="GO:0010086">
    <property type="term" value="P:embryonic root morphogenesis"/>
    <property type="evidence" value="ECO:0000315"/>
    <property type="project" value="TAIR"/>
</dbReference>
<dbReference type="GO" id="GO:0048579">
    <property type="term" value="P:negative regulation of long-day photoperiodism, flowering"/>
    <property type="evidence" value="ECO:0000315"/>
    <property type="project" value="TAIR"/>
</dbReference>
<dbReference type="GO" id="GO:0051302">
    <property type="term" value="P:regulation of cell division"/>
    <property type="evidence" value="ECO:0000315"/>
    <property type="project" value="TAIR"/>
</dbReference>
<dbReference type="CDD" id="cd05779">
    <property type="entry name" value="DNA_polB_epsilon_exo"/>
    <property type="match status" value="1"/>
</dbReference>
<dbReference type="CDD" id="cd05535">
    <property type="entry name" value="POLBc_epsilon"/>
    <property type="match status" value="1"/>
</dbReference>
<dbReference type="FunFam" id="1.10.132.60:FF:000002">
    <property type="entry name" value="DNA polymerase epsilon catalytic subunit"/>
    <property type="match status" value="1"/>
</dbReference>
<dbReference type="FunFam" id="3.30.342.10:FF:000012">
    <property type="entry name" value="DNA polymerase epsilon catalytic subunit"/>
    <property type="match status" value="1"/>
</dbReference>
<dbReference type="FunFam" id="3.30.420.10:FF:000010">
    <property type="entry name" value="DNA polymerase epsilon catalytic subunit"/>
    <property type="match status" value="1"/>
</dbReference>
<dbReference type="FunFam" id="3.90.1600.10:FF:000006">
    <property type="entry name" value="DNA polymerase epsilon catalytic subunit"/>
    <property type="match status" value="1"/>
</dbReference>
<dbReference type="Gene3D" id="1.10.132.60">
    <property type="entry name" value="DNA polymerase family B, C-terminal domain"/>
    <property type="match status" value="1"/>
</dbReference>
<dbReference type="Gene3D" id="3.30.342.10">
    <property type="entry name" value="DNA Polymerase, chain B, domain 1"/>
    <property type="match status" value="1"/>
</dbReference>
<dbReference type="Gene3D" id="3.90.1600.10">
    <property type="entry name" value="Palm domain of DNA polymerase"/>
    <property type="match status" value="1"/>
</dbReference>
<dbReference type="Gene3D" id="3.30.420.10">
    <property type="entry name" value="Ribonuclease H-like superfamily/Ribonuclease H"/>
    <property type="match status" value="1"/>
</dbReference>
<dbReference type="InterPro" id="IPR006172">
    <property type="entry name" value="DNA-dir_DNA_pol_B"/>
</dbReference>
<dbReference type="InterPro" id="IPR006133">
    <property type="entry name" value="DNA-dir_DNA_pol_B_exonuc"/>
</dbReference>
<dbReference type="InterPro" id="IPR043502">
    <property type="entry name" value="DNA/RNA_pol_sf"/>
</dbReference>
<dbReference type="InterPro" id="IPR042087">
    <property type="entry name" value="DNA_pol_B_thumb"/>
</dbReference>
<dbReference type="InterPro" id="IPR013697">
    <property type="entry name" value="DNA_pol_e_suA_C"/>
</dbReference>
<dbReference type="InterPro" id="IPR023211">
    <property type="entry name" value="DNA_pol_palm_dom_sf"/>
</dbReference>
<dbReference type="InterPro" id="IPR029703">
    <property type="entry name" value="POL2"/>
</dbReference>
<dbReference type="InterPro" id="IPR055191">
    <property type="entry name" value="POL2_thumb"/>
</dbReference>
<dbReference type="InterPro" id="IPR012337">
    <property type="entry name" value="RNaseH-like_sf"/>
</dbReference>
<dbReference type="InterPro" id="IPR036397">
    <property type="entry name" value="RNaseH_sf"/>
</dbReference>
<dbReference type="InterPro" id="IPR054475">
    <property type="entry name" value="Znf-DPOE"/>
</dbReference>
<dbReference type="PANTHER" id="PTHR10670">
    <property type="entry name" value="DNA POLYMERASE EPSILON CATALYTIC SUBUNIT A"/>
    <property type="match status" value="1"/>
</dbReference>
<dbReference type="PANTHER" id="PTHR10670:SF0">
    <property type="entry name" value="DNA POLYMERASE EPSILON CATALYTIC SUBUNIT A"/>
    <property type="match status" value="1"/>
</dbReference>
<dbReference type="Pfam" id="PF03104">
    <property type="entry name" value="DNA_pol_B_exo1"/>
    <property type="match status" value="1"/>
</dbReference>
<dbReference type="Pfam" id="PF08490">
    <property type="entry name" value="DUF1744"/>
    <property type="match status" value="1"/>
</dbReference>
<dbReference type="Pfam" id="PF22634">
    <property type="entry name" value="POL2_thumb"/>
    <property type="match status" value="1"/>
</dbReference>
<dbReference type="Pfam" id="PF22912">
    <property type="entry name" value="zf-DPOE"/>
    <property type="match status" value="1"/>
</dbReference>
<dbReference type="Pfam" id="PF23250">
    <property type="entry name" value="zf_DPOE_2"/>
    <property type="match status" value="1"/>
</dbReference>
<dbReference type="SMART" id="SM01159">
    <property type="entry name" value="DUF1744"/>
    <property type="match status" value="1"/>
</dbReference>
<dbReference type="SMART" id="SM00486">
    <property type="entry name" value="POLBc"/>
    <property type="match status" value="1"/>
</dbReference>
<dbReference type="SUPFAM" id="SSF56672">
    <property type="entry name" value="DNA/RNA polymerases"/>
    <property type="match status" value="1"/>
</dbReference>
<dbReference type="SUPFAM" id="SSF53098">
    <property type="entry name" value="Ribonuclease H-like"/>
    <property type="match status" value="1"/>
</dbReference>
<sequence length="2161" mass="248897">MSGDNRRRDRKDTRWSKKPKVVNTAEDELESKLGFGLFSEGETRLGWLLTFSSSSWEDRDTGKVYSCVDLYFVTQDGFSFKTKYKFRPYFYAATKDKMELELEAYLRRRYERQVADIEIVEKEDLDLKNHLSGLQKKYLKISFDTVQQLMEVKRDLLHIVERNQAKFDALEAYESILAGKREQRPQDCLDSIVDLREYDVPYHVRFAIDNDVRSGQWYNVSISSTDVILEKRTDLLQRAEVRVCAFDIETTKLPLKFPDAEYDQIMMISYMVDGQGFLIINRECVGEDVEDLEYTPKPEFEGYFKVTNVKNEVELLQRWFYHMQELKPGIYVTYNGDFFDWPFIERRASHHGIKMNEELGFRCDQNQGECRAKFACHLDCFAWVKRDSYLPQGSHGLKAVTKAKLGYDPLEVNPEDMVRFAMEKPQTMASYSVSDAVATYYLYMTYVNPFIFSLATIIPMVPDEVLRKGSGTLCEMLLMVEAYKANVVCPNKNQADPEKFYQNQLLESETYIGGHVECLESGVFRSDIPTSFKLDSSAYQQLIDNLGRDLEYAITVEGKMRMDSISNYDEVKDEIKEKLEKLRDDPIREEGPLIYHLDVAAMYPNIILTNRLQPPSIVTDEICTACDFNRPGKTCLRKLEWVWRGVTFMGKKSDYYHLKKQIESEFVDAGANIMSSKSFLDLPKVDQQSKLKERLKKYCQKAYKRVLDKPITEVREAGICMRENPFYVDTVRSFRDRRYEYKTLNKVWKGKLSEAKASGNSIKIQEAQDMVVVYDSLQLAHKCILNSFYGYVMRKGARWYSMEMAGVVTYTGAKIIQNARLLIERIGKPLELDTDGIWCCLPGSFPENFTFKTIDMKKLTISYPCVMLNVDVAKNNTNDQYQTLVDPVRKTYKSHSECSIEFEVDGPYKAMIIPASKEEGILIKKRYAVFNHDGTLAELKGFEIKRRGELKLIKVFQAELFDKFLHGSTLEECYSAVAAVADRWLDLLDNQGKDIADSELLDYISESSTMSKSLADYGEQKSCAVTTAKRLAEFLGVTMVKDKGLRCQYIVACEPKGTPVSERAVPVAIFTTNPEVMKFHLRKWCKTSSDVGIRLIIDWSYYKQRLSSAIQKVITIPAAMQKVANPVPRVLHPDWLHKKVREKDDKFRQRKLVDMFSSANKDVVLDTDLPVTKDNVEDIEDFCKENRPSVKGPKPIARSYEVNKKQSECEQQESWDTEFHDISFQNIDKSVNYQGWLELKKRKWKVTLEKKKKRRLGDLRSSNQVDTHEINQKVGQGRGGVGSYFRRPEEALTSSHWQIIQLVPSPQSGQFFAWVVVEGLMLKIPLSIPRVFYINSKVPIDEYFQGKCVNKILPHGRPCYSLTEVKIQEDQFKKESKKRAALLADPGVEGIYETKVPLEFSAICQIGCVCKIDNKAKHRNTQDGWEVGELHMKTTTECHYLKRSIPLVYLYNSTSTGRAIYVLYCHVSKLMSAVVVDPFNGNELLPSALERQFRDSCLELSLDSLSWDGIRFQVHYVDHPEAAKKIIQRAISEYREENCGPTVAVIECPDFTFMKEGIKALDDFPCVRIPFNDDDNSYQPVSWQRPAAKIAMFRCAAAFQWLDRRITQSRYAHVPLGNFGLDWLTFTIDIFLSRALRDQQQVLWVSDNGVPDLGGINNEEAFFADEVQQTSLVFPGAYRKVSVELKIHNLAVNALLKSNLVNEMEGGGFMGFEQDVNPRGINSNDNTSFDETTGCAQAFRVLKQLIHSCLTDVRKSKNIYADSILQRLSWWLCSPSSKLHDPALHLMLHKVMQKVFALLLTDLRRLGAIIIYADFSKVIIDTVKFDLSAAKAYCESLLSTVRNSDIFEWILLEPVHYWHSLLFMDQYNYAGIRADDEISLDEVTIEPKWSVARHLPEYIERDFIIIIAKFIFDPWKFAIENKKGSSESLEAQMIEYLREQIGSTFINMLVKKVDDIMSHMKEINVSDASRVSGQAPKGDYSLEFIQVISAVLALDQNVQQDVLVMRKSLLKYIKVKECAAEAEFLDPGPSFILPNVACSNCDAYRDLDICRDPALLTEKEWSCADTQCGKIYDREQMESSLLEMVRQRERMYHMQDVVCIRCNQVKAAHLTEQCECSGSFRCKESGSEFSKRMEIFMDIAKRQKFRLLEEYISWIIYGPSY</sequence>
<feature type="chain" id="PRO_0000420240" description="DNA polymerase epsilon catalytic subunit A">
    <location>
        <begin position="1"/>
        <end position="2161"/>
    </location>
</feature>
<feature type="zinc finger region" description="CysA-type" evidence="2">
    <location>
        <begin position="2038"/>
        <end position="2068"/>
    </location>
</feature>
<feature type="short sequence motif" description="Nuclear localization signal 1" evidence="1">
    <location>
        <begin position="5"/>
        <end position="12"/>
    </location>
</feature>
<feature type="short sequence motif" description="Nuclear localization signal 2" evidence="1">
    <location>
        <begin position="1137"/>
        <end position="1144"/>
    </location>
</feature>
<feature type="short sequence motif" description="Nuclear localization signal 3" evidence="1">
    <location>
        <begin position="1239"/>
        <end position="1246"/>
    </location>
</feature>
<feature type="short sequence motif" description="CysB motif" evidence="2">
    <location>
        <begin position="2099"/>
        <end position="2116"/>
    </location>
</feature>
<feature type="short sequence motif" description="Nuclear localization signal 4" evidence="1">
    <location>
        <begin position="2130"/>
        <end position="2137"/>
    </location>
</feature>
<feature type="binding site" evidence="2">
    <location>
        <position position="2038"/>
    </location>
    <ligand>
        <name>Zn(2+)</name>
        <dbReference type="ChEBI" id="CHEBI:29105"/>
    </ligand>
</feature>
<feature type="binding site" evidence="2">
    <location>
        <position position="2041"/>
    </location>
    <ligand>
        <name>Zn(2+)</name>
        <dbReference type="ChEBI" id="CHEBI:29105"/>
    </ligand>
</feature>
<feature type="binding site" evidence="2">
    <location>
        <position position="2063"/>
    </location>
    <ligand>
        <name>Zn(2+)</name>
        <dbReference type="ChEBI" id="CHEBI:29105"/>
    </ligand>
</feature>
<feature type="binding site" evidence="2">
    <location>
        <position position="2068"/>
    </location>
    <ligand>
        <name>Zn(2+)</name>
        <dbReference type="ChEBI" id="CHEBI:29105"/>
    </ligand>
</feature>
<feature type="binding site" evidence="2">
    <location>
        <position position="2099"/>
    </location>
    <ligand>
        <name>[4Fe-4S] cluster</name>
        <dbReference type="ChEBI" id="CHEBI:49883"/>
    </ligand>
</feature>
<feature type="binding site" evidence="2">
    <location>
        <position position="2102"/>
    </location>
    <ligand>
        <name>[4Fe-4S] cluster</name>
        <dbReference type="ChEBI" id="CHEBI:49883"/>
    </ligand>
</feature>
<feature type="binding site" evidence="2">
    <location>
        <position position="2114"/>
    </location>
    <ligand>
        <name>[4Fe-4S] cluster</name>
        <dbReference type="ChEBI" id="CHEBI:49883"/>
    </ligand>
</feature>
<feature type="binding site" evidence="2">
    <location>
        <position position="2116"/>
    </location>
    <ligand>
        <name>[4Fe-4S] cluster</name>
        <dbReference type="ChEBI" id="CHEBI:49883"/>
    </ligand>
</feature>
<feature type="mutagenesis site" description="In til1-4; lengthening of the cell cycle during embryo development and alters cell type patterning of the hypophyseal lineage in the root, leading to a displacement of the root pole from its normal position on top of the suspensor. Slow growing roots, slightly delayed flowering, altered floral phyllotaxis, a reduced number of ovules, abnormally developing ovules, and reduced fertility." evidence="5">
    <original>G</original>
    <variation>R</variation>
    <location>
        <position position="469"/>
    </location>
</feature>
<feature type="mutagenesis site" description="In esd7-1; early flowering independently of photoperiod, shortened inflorescence internodes and altered flowers, leaves and roots development. Enrichement in acetylated H3 and trimethylated H3 'Lys-4' (H3K4me3) activating epigenetic marks of the chromatin of FT and AG loci." evidence="7">
    <original>G</original>
    <variation>R</variation>
    <location>
        <position position="992"/>
    </location>
</feature>
<gene>
    <name type="primary">POL2A</name>
    <name type="synonym">ABO4</name>
    <name type="synonym">EMB142</name>
    <name type="synonym">EMB2284</name>
    <name type="synonym">EMB529</name>
    <name type="synonym">ESD7</name>
    <name type="synonym">TIL1</name>
    <name type="ordered locus">At1g08260</name>
    <name type="ORF">T23G18.21</name>
</gene>
<organism>
    <name type="scientific">Arabidopsis thaliana</name>
    <name type="common">Mouse-ear cress</name>
    <dbReference type="NCBI Taxonomy" id="3702"/>
    <lineage>
        <taxon>Eukaryota</taxon>
        <taxon>Viridiplantae</taxon>
        <taxon>Streptophyta</taxon>
        <taxon>Embryophyta</taxon>
        <taxon>Tracheophyta</taxon>
        <taxon>Spermatophyta</taxon>
        <taxon>Magnoliopsida</taxon>
        <taxon>eudicotyledons</taxon>
        <taxon>Gunneridae</taxon>
        <taxon>Pentapetalae</taxon>
        <taxon>rosids</taxon>
        <taxon>malvids</taxon>
        <taxon>Brassicales</taxon>
        <taxon>Brassicaceae</taxon>
        <taxon>Camelineae</taxon>
        <taxon>Arabidopsis</taxon>
    </lineage>
</organism>
<reference key="1">
    <citation type="journal article" date="2000" name="Nature">
        <title>Sequence and analysis of chromosome 1 of the plant Arabidopsis thaliana.</title>
        <authorList>
            <person name="Theologis A."/>
            <person name="Ecker J.R."/>
            <person name="Palm C.J."/>
            <person name="Federspiel N.A."/>
            <person name="Kaul S."/>
            <person name="White O."/>
            <person name="Alonso J."/>
            <person name="Altafi H."/>
            <person name="Araujo R."/>
            <person name="Bowman C.L."/>
            <person name="Brooks S.Y."/>
            <person name="Buehler E."/>
            <person name="Chan A."/>
            <person name="Chao Q."/>
            <person name="Chen H."/>
            <person name="Cheuk R.F."/>
            <person name="Chin C.W."/>
            <person name="Chung M.K."/>
            <person name="Conn L."/>
            <person name="Conway A.B."/>
            <person name="Conway A.R."/>
            <person name="Creasy T.H."/>
            <person name="Dewar K."/>
            <person name="Dunn P."/>
            <person name="Etgu P."/>
            <person name="Feldblyum T.V."/>
            <person name="Feng J.-D."/>
            <person name="Fong B."/>
            <person name="Fujii C.Y."/>
            <person name="Gill J.E."/>
            <person name="Goldsmith A.D."/>
            <person name="Haas B."/>
            <person name="Hansen N.F."/>
            <person name="Hughes B."/>
            <person name="Huizar L."/>
            <person name="Hunter J.L."/>
            <person name="Jenkins J."/>
            <person name="Johnson-Hopson C."/>
            <person name="Khan S."/>
            <person name="Khaykin E."/>
            <person name="Kim C.J."/>
            <person name="Koo H.L."/>
            <person name="Kremenetskaia I."/>
            <person name="Kurtz D.B."/>
            <person name="Kwan A."/>
            <person name="Lam B."/>
            <person name="Langin-Hooper S."/>
            <person name="Lee A."/>
            <person name="Lee J.M."/>
            <person name="Lenz C.A."/>
            <person name="Li J.H."/>
            <person name="Li Y.-P."/>
            <person name="Lin X."/>
            <person name="Liu S.X."/>
            <person name="Liu Z.A."/>
            <person name="Luros J.S."/>
            <person name="Maiti R."/>
            <person name="Marziali A."/>
            <person name="Militscher J."/>
            <person name="Miranda M."/>
            <person name="Nguyen M."/>
            <person name="Nierman W.C."/>
            <person name="Osborne B.I."/>
            <person name="Pai G."/>
            <person name="Peterson J."/>
            <person name="Pham P.K."/>
            <person name="Rizzo M."/>
            <person name="Rooney T."/>
            <person name="Rowley D."/>
            <person name="Sakano H."/>
            <person name="Salzberg S.L."/>
            <person name="Schwartz J.R."/>
            <person name="Shinn P."/>
            <person name="Southwick A.M."/>
            <person name="Sun H."/>
            <person name="Tallon L.J."/>
            <person name="Tambunga G."/>
            <person name="Toriumi M.J."/>
            <person name="Town C.D."/>
            <person name="Utterback T."/>
            <person name="Van Aken S."/>
            <person name="Vaysberg M."/>
            <person name="Vysotskaia V.S."/>
            <person name="Walker M."/>
            <person name="Wu D."/>
            <person name="Yu G."/>
            <person name="Fraser C.M."/>
            <person name="Venter J.C."/>
            <person name="Davis R.W."/>
        </authorList>
    </citation>
    <scope>NUCLEOTIDE SEQUENCE [LARGE SCALE GENOMIC DNA]</scope>
    <source>
        <strain>cv. Columbia</strain>
    </source>
</reference>
<reference key="2">
    <citation type="journal article" date="2017" name="Plant J.">
        <title>Araport11: a complete reannotation of the Arabidopsis thaliana reference genome.</title>
        <authorList>
            <person name="Cheng C.Y."/>
            <person name="Krishnakumar V."/>
            <person name="Chan A.P."/>
            <person name="Thibaud-Nissen F."/>
            <person name="Schobel S."/>
            <person name="Town C.D."/>
        </authorList>
    </citation>
    <scope>GENOME REANNOTATION</scope>
    <source>
        <strain>cv. Columbia</strain>
    </source>
</reference>
<reference key="3">
    <citation type="journal article" date="2005" name="Plant Cell">
        <title>Interactions between the cell cycle and embryonic patterning in Arabidopsis uncovered by a mutation in DNA polymerase epsilon.</title>
        <authorList>
            <person name="Jenik P.D."/>
            <person name="Jurkuta R.E.J."/>
            <person name="Barton M.K."/>
        </authorList>
    </citation>
    <scope>FUNCTION</scope>
    <scope>DISRUPTION PHENOTYPE</scope>
    <scope>MUTAGENESIS OF GLY-469</scope>
    <scope>TISSUE SPECIFICITY</scope>
</reference>
<reference key="4">
    <citation type="journal article" date="2005" name="Plant J.">
        <title>Genetic analysis of two Arabidopsis DNA polymerase epsilon subunits during early embryogenesis.</title>
        <authorList>
            <person name="Ronceret A."/>
            <person name="Guilleminot J."/>
            <person name="Lincker F."/>
            <person name="Gadea-Vacas J."/>
            <person name="Delorme V."/>
            <person name="Bechtold N."/>
            <person name="Pelletier G."/>
            <person name="Delseny M."/>
            <person name="Chaboute M.-E."/>
            <person name="Devic M."/>
        </authorList>
    </citation>
    <scope>FUNCTION</scope>
    <scope>DISRUPTION PHENOTYPE</scope>
    <scope>INDUCTION BY CELL CYCLE</scope>
    <scope>INTERACTION WITH DPB2</scope>
    <scope>GENE FAMILY</scope>
    <scope>NOMENCLATURE</scope>
</reference>
<reference key="5">
    <citation type="journal article" date="2009" name="Plant Cell">
        <title>Epigenetic regulation, somatic homologous recombination, and abscisic acid signaling are influenced by DNA polymerase epsilon mutation in Arabidopsis.</title>
        <authorList>
            <person name="Yin H."/>
            <person name="Zhang X."/>
            <person name="Liu J."/>
            <person name="Wang Y."/>
            <person name="He J."/>
            <person name="Yang T."/>
            <person name="Hong X."/>
            <person name="Yang Q."/>
            <person name="Gong Z."/>
        </authorList>
    </citation>
    <scope>FUNCTION</scope>
    <source>
        <strain>cv. Columbia GL1</strain>
    </source>
</reference>
<reference key="6">
    <citation type="journal article" date="2010" name="Plant J.">
        <title>EARLY IN SHORT DAYS 7 (ESD7) encodes the catalytic subunit of DNA polymerase epsilon and is required for flowering repression through a mechanism involving epigenetic gene silencing.</title>
        <authorList>
            <person name="del Olmo I."/>
            <person name="Lopez-Gonzalez L."/>
            <person name="Martin-Trillo M.M."/>
            <person name="Martinez-Zapater J.M."/>
            <person name="Pineiro M."/>
            <person name="Jarillo J.A."/>
        </authorList>
    </citation>
    <scope>FUNCTION</scope>
    <scope>MUTAGENESIS OF GLY-992</scope>
    <scope>DISRUPTION PHENOTYPE</scope>
    <scope>INTERACTION WITH LHP1/TFL2</scope>
    <scope>TISSUE SPECIFICITY</scope>
    <scope>DEVELOPMENTAL STAGE</scope>
</reference>
<proteinExistence type="evidence at protein level"/>
<name>DPOE1_ARATH</name>
<comment type="function">
    <text evidence="4 5 6 7">DNA polymerase II, which participates in chromosomal DNA replication. Required for the timing and determination of cell fate during plant embryogenesis and root pole development, by promoting cell cycle and cell type patterning. Necessary for proper shoot (SAM) and root apical meristem (RAM) functions. Involved in maintaining epigenetic states, controlling hypersensitive response (HR), and mediating abscisic acid (ABA) signaling. Required for flowering repression through a mechanism involving epigenetic gene silencing. May participate in processes involved in chromatin-mediated cellular memory.</text>
</comment>
<comment type="catalytic activity">
    <reaction evidence="2">
        <text>DNA(n) + a 2'-deoxyribonucleoside 5'-triphosphate = DNA(n+1) + diphosphate</text>
        <dbReference type="Rhea" id="RHEA:22508"/>
        <dbReference type="Rhea" id="RHEA-COMP:17339"/>
        <dbReference type="Rhea" id="RHEA-COMP:17340"/>
        <dbReference type="ChEBI" id="CHEBI:33019"/>
        <dbReference type="ChEBI" id="CHEBI:61560"/>
        <dbReference type="ChEBI" id="CHEBI:173112"/>
        <dbReference type="EC" id="2.7.7.7"/>
    </reaction>
</comment>
<comment type="cofactor">
    <cofactor evidence="2">
        <name>[4Fe-4S] cluster</name>
        <dbReference type="ChEBI" id="CHEBI:49883"/>
    </cofactor>
    <text evidence="2">Binds 1 [4Fe-4S] cluster.</text>
</comment>
<comment type="subunit">
    <text evidence="1 4 7">Heterotetramer (By similarity). Subunit of the DNA polymerase II (PubMed:16212602, PubMed:19947980). Interacts (via C-terminus) with DPB2 (PubMed:16212602). Interacts with LHP1/TFL2 (PubMed:19947980).</text>
</comment>
<comment type="subcellular location">
    <subcellularLocation>
        <location evidence="1">Nucleus</location>
    </subcellularLocation>
</comment>
<comment type="tissue specificity">
    <text evidence="5 7">Mostly expressed at low levels in inflorescence (floral meristem and flowers until anthesis), and, to a lower extent, in roots, seeds and leaves.</text>
</comment>
<comment type="developmental stage">
    <text evidence="7">Present in actively dividing cells such as root and shoot meristematic regions, young leaves and stems, inflorescences and siliques.</text>
</comment>
<comment type="induction">
    <text evidence="4">Follows a cell-cycle-dependent expression with a maximal induction in the S phase and another induction at the G2/M transition.</text>
</comment>
<comment type="domain">
    <text evidence="3">The DNA polymerase activity domain resides in the N-terminal half of the protein, while the C-terminus is necessary for maintenance of the complex.</text>
</comment>
<comment type="domain">
    <text evidence="2">The CysA-type zinc finger is required for PCNA-binding.</text>
</comment>
<comment type="domain">
    <text evidence="2">The CysB motif binds 1 4Fe-4S cluster and is required for the formation of polymerase complexes.</text>
</comment>
<comment type="disruption phenotype">
    <text evidence="4 5 7">Lethal, with sporophytic embryo-defective with an arrest at the globular stage during embryo development. Abnormal cell division characterized by several rounds of mitosis with aberrant planes of division.</text>
</comment>
<comment type="similarity">
    <text evidence="8">Belongs to the DNA polymerase type-B family.</text>
</comment>
<comment type="sequence caution" evidence="8">
    <conflict type="erroneous gene model prediction">
        <sequence resource="EMBL-CDS" id="AAF18240"/>
    </conflict>
</comment>
<protein>
    <recommendedName>
        <fullName>DNA polymerase epsilon catalytic subunit A</fullName>
        <ecNumber evidence="2">2.7.7.7</ecNumber>
    </recommendedName>
    <alternativeName>
        <fullName>DNA polymerase 2 a</fullName>
        <shortName>AtPOL2a</shortName>
    </alternativeName>
    <alternativeName>
        <fullName>DNA polymerase II subunit a</fullName>
    </alternativeName>
    <alternativeName>
        <fullName>Protein ABA OVERLY SENSITIVE a</fullName>
    </alternativeName>
    <alternativeName>
        <fullName>Protein EARLY IN SHORT DAYS 7</fullName>
    </alternativeName>
    <alternativeName>
        <fullName>Protein EMBRYO DEFECTIVE 142</fullName>
    </alternativeName>
    <alternativeName>
        <fullName>Protein EMBRYO DEFECTIVE 2284</fullName>
    </alternativeName>
    <alternativeName>
        <fullName>Protein EMBRYO DEFECTIVE 529</fullName>
    </alternativeName>
    <alternativeName>
        <fullName>Protein TILTED 1</fullName>
    </alternativeName>
</protein>
<keyword id="KW-0004">4Fe-4S</keyword>
<keyword id="KW-0235">DNA replication</keyword>
<keyword id="KW-0238">DNA-binding</keyword>
<keyword id="KW-0239">DNA-directed DNA polymerase</keyword>
<keyword id="KW-0408">Iron</keyword>
<keyword id="KW-0411">Iron-sulfur</keyword>
<keyword id="KW-0479">Metal-binding</keyword>
<keyword id="KW-0548">Nucleotidyltransferase</keyword>
<keyword id="KW-0539">Nucleus</keyword>
<keyword id="KW-1185">Reference proteome</keyword>
<keyword id="KW-0808">Transferase</keyword>
<keyword id="KW-0862">Zinc</keyword>
<keyword id="KW-0863">Zinc-finger</keyword>
<accession>F4HW04</accession>
<accession>B3H4I0</accession>
<accession>Q9SGD5</accession>